<sequence length="453" mass="50064">MPDYDTQTLRDWDRRHIWHPFTQMKEWEESEPVVIVEGEGSWIIDSEGKRYLDGVAAIWTNVHGHCRREINEALKAQVDRLEHSTLLGLTNDRAVVLAKRLAEIAPPGLCKVFYSDNGSTAVEVGVKMAFQFWRHEGKPEKSRFISFTSAYHGDTLGAVSVGGIDLFHGVFRPLLFPTIQAPAPYCYRCPMGRDTPAACGMECLTELERIMESHAGEVAGLVIEPLVQGAGGMIVQPEGFLKGVRELCDRHDILMIADEVAVGFGRTGAMFACGREGITPDIMALSKGITAGYMPLAATLATQQVYDAFLGEYREMKTFFHGHTFTGNPLGCAVALASLDLFESDRLLGKLPNKIKLLQEKLKGLIELEHVGDVRQCGMIAAVELVRDRATKEPFDWEERVGVRVCLEARTHGVFLRPLGNVIVIFPPLAITAEEIDFLVDGLEKSIHTVTGG</sequence>
<dbReference type="EC" id="2.6.1.62" evidence="1"/>
<dbReference type="EMBL" id="AE017180">
    <property type="protein sequence ID" value="AAR34956.1"/>
    <property type="molecule type" value="Genomic_DNA"/>
</dbReference>
<dbReference type="RefSeq" id="NP_952633.1">
    <property type="nucleotide sequence ID" value="NC_002939.5"/>
</dbReference>
<dbReference type="RefSeq" id="WP_010942227.1">
    <property type="nucleotide sequence ID" value="NC_002939.5"/>
</dbReference>
<dbReference type="SMR" id="Q74CT9"/>
<dbReference type="FunCoup" id="Q74CT9">
    <property type="interactions" value="217"/>
</dbReference>
<dbReference type="STRING" id="243231.GSU1582"/>
<dbReference type="EnsemblBacteria" id="AAR34956">
    <property type="protein sequence ID" value="AAR34956"/>
    <property type="gene ID" value="GSU1582"/>
</dbReference>
<dbReference type="KEGG" id="gsu:GSU1582"/>
<dbReference type="PATRIC" id="fig|243231.5.peg.1623"/>
<dbReference type="eggNOG" id="COG0161">
    <property type="taxonomic scope" value="Bacteria"/>
</dbReference>
<dbReference type="HOGENOM" id="CLU_016922_4_3_7"/>
<dbReference type="InParanoid" id="Q74CT9"/>
<dbReference type="OrthoDB" id="9801052at2"/>
<dbReference type="UniPathway" id="UPA00078">
    <property type="reaction ID" value="UER00160"/>
</dbReference>
<dbReference type="Proteomes" id="UP000000577">
    <property type="component" value="Chromosome"/>
</dbReference>
<dbReference type="GO" id="GO:0005737">
    <property type="term" value="C:cytoplasm"/>
    <property type="evidence" value="ECO:0007669"/>
    <property type="project" value="UniProtKB-SubCell"/>
</dbReference>
<dbReference type="GO" id="GO:0004015">
    <property type="term" value="F:adenosylmethionine-8-amino-7-oxononanoate transaminase activity"/>
    <property type="evidence" value="ECO:0000318"/>
    <property type="project" value="GO_Central"/>
</dbReference>
<dbReference type="GO" id="GO:0030170">
    <property type="term" value="F:pyridoxal phosphate binding"/>
    <property type="evidence" value="ECO:0007669"/>
    <property type="project" value="UniProtKB-UniRule"/>
</dbReference>
<dbReference type="GO" id="GO:0009102">
    <property type="term" value="P:biotin biosynthetic process"/>
    <property type="evidence" value="ECO:0000318"/>
    <property type="project" value="GO_Central"/>
</dbReference>
<dbReference type="CDD" id="cd00610">
    <property type="entry name" value="OAT_like"/>
    <property type="match status" value="1"/>
</dbReference>
<dbReference type="FunFam" id="3.40.640.10:FF:000078">
    <property type="entry name" value="Adenosylmethionine-8-amino-7-oxononanoate aminotransferase"/>
    <property type="match status" value="1"/>
</dbReference>
<dbReference type="Gene3D" id="3.90.1150.10">
    <property type="entry name" value="Aspartate Aminotransferase, domain 1"/>
    <property type="match status" value="1"/>
</dbReference>
<dbReference type="Gene3D" id="3.40.640.10">
    <property type="entry name" value="Type I PLP-dependent aspartate aminotransferase-like (Major domain)"/>
    <property type="match status" value="1"/>
</dbReference>
<dbReference type="HAMAP" id="MF_00834">
    <property type="entry name" value="BioA"/>
    <property type="match status" value="1"/>
</dbReference>
<dbReference type="InterPro" id="IPR005814">
    <property type="entry name" value="Aminotrans_3"/>
</dbReference>
<dbReference type="InterPro" id="IPR049704">
    <property type="entry name" value="Aminotrans_3_PPA_site"/>
</dbReference>
<dbReference type="InterPro" id="IPR005815">
    <property type="entry name" value="BioA"/>
</dbReference>
<dbReference type="InterPro" id="IPR015424">
    <property type="entry name" value="PyrdxlP-dep_Trfase"/>
</dbReference>
<dbReference type="InterPro" id="IPR015421">
    <property type="entry name" value="PyrdxlP-dep_Trfase_major"/>
</dbReference>
<dbReference type="InterPro" id="IPR015422">
    <property type="entry name" value="PyrdxlP-dep_Trfase_small"/>
</dbReference>
<dbReference type="NCBIfam" id="TIGR00508">
    <property type="entry name" value="bioA"/>
    <property type="match status" value="1"/>
</dbReference>
<dbReference type="PANTHER" id="PTHR42684">
    <property type="entry name" value="ADENOSYLMETHIONINE-8-AMINO-7-OXONONANOATE AMINOTRANSFERASE"/>
    <property type="match status" value="1"/>
</dbReference>
<dbReference type="PANTHER" id="PTHR42684:SF17">
    <property type="entry name" value="ADENOSYLMETHIONINE-8-AMINO-7-OXONONANOATE AMINOTRANSFERASE"/>
    <property type="match status" value="1"/>
</dbReference>
<dbReference type="Pfam" id="PF00202">
    <property type="entry name" value="Aminotran_3"/>
    <property type="match status" value="1"/>
</dbReference>
<dbReference type="PIRSF" id="PIRSF000521">
    <property type="entry name" value="Transaminase_4ab_Lys_Orn"/>
    <property type="match status" value="1"/>
</dbReference>
<dbReference type="SUPFAM" id="SSF53383">
    <property type="entry name" value="PLP-dependent transferases"/>
    <property type="match status" value="1"/>
</dbReference>
<dbReference type="PROSITE" id="PS00600">
    <property type="entry name" value="AA_TRANSFER_CLASS_3"/>
    <property type="match status" value="1"/>
</dbReference>
<keyword id="KW-0032">Aminotransferase</keyword>
<keyword id="KW-0093">Biotin biosynthesis</keyword>
<keyword id="KW-0963">Cytoplasm</keyword>
<keyword id="KW-0663">Pyridoxal phosphate</keyword>
<keyword id="KW-1185">Reference proteome</keyword>
<keyword id="KW-0949">S-adenosyl-L-methionine</keyword>
<keyword id="KW-0808">Transferase</keyword>
<evidence type="ECO:0000255" key="1">
    <source>
        <dbReference type="HAMAP-Rule" id="MF_00834"/>
    </source>
</evidence>
<comment type="function">
    <text evidence="1">Catalyzes the transfer of the alpha-amino group from S-adenosyl-L-methionine (SAM) to 7-keto-8-aminopelargonic acid (KAPA) to form 7,8-diaminopelargonic acid (DAPA). It is the only aminotransferase known to utilize SAM as an amino donor.</text>
</comment>
<comment type="catalytic activity">
    <reaction evidence="1">
        <text>(8S)-8-amino-7-oxononanoate + S-adenosyl-L-methionine = S-adenosyl-4-methylsulfanyl-2-oxobutanoate + (7R,8S)-7,8-diammoniononanoate</text>
        <dbReference type="Rhea" id="RHEA:16861"/>
        <dbReference type="ChEBI" id="CHEBI:16490"/>
        <dbReference type="ChEBI" id="CHEBI:59789"/>
        <dbReference type="ChEBI" id="CHEBI:149468"/>
        <dbReference type="ChEBI" id="CHEBI:149469"/>
        <dbReference type="EC" id="2.6.1.62"/>
    </reaction>
</comment>
<comment type="cofactor">
    <cofactor evidence="1">
        <name>pyridoxal 5'-phosphate</name>
        <dbReference type="ChEBI" id="CHEBI:597326"/>
    </cofactor>
</comment>
<comment type="pathway">
    <text evidence="1">Cofactor biosynthesis; biotin biosynthesis; 7,8-diaminononanoate from 8-amino-7-oxononanoate (SAM route): step 1/1.</text>
</comment>
<comment type="subunit">
    <text evidence="1">Homodimer.</text>
</comment>
<comment type="subcellular location">
    <subcellularLocation>
        <location evidence="1">Cytoplasm</location>
    </subcellularLocation>
</comment>
<comment type="similarity">
    <text evidence="1">Belongs to the class-III pyridoxal-phosphate-dependent aminotransferase family. BioA subfamily.</text>
</comment>
<reference key="1">
    <citation type="journal article" date="2003" name="Science">
        <title>Genome of Geobacter sulfurreducens: metal reduction in subsurface environments.</title>
        <authorList>
            <person name="Methe B.A."/>
            <person name="Nelson K.E."/>
            <person name="Eisen J.A."/>
            <person name="Paulsen I.T."/>
            <person name="Nelson W.C."/>
            <person name="Heidelberg J.F."/>
            <person name="Wu D."/>
            <person name="Wu M."/>
            <person name="Ward N.L."/>
            <person name="Beanan M.J."/>
            <person name="Dodson R.J."/>
            <person name="Madupu R."/>
            <person name="Brinkac L.M."/>
            <person name="Daugherty S.C."/>
            <person name="DeBoy R.T."/>
            <person name="Durkin A.S."/>
            <person name="Gwinn M.L."/>
            <person name="Kolonay J.F."/>
            <person name="Sullivan S.A."/>
            <person name="Haft D.H."/>
            <person name="Selengut J."/>
            <person name="Davidsen T.M."/>
            <person name="Zafar N."/>
            <person name="White O."/>
            <person name="Tran B."/>
            <person name="Romero C."/>
            <person name="Forberger H.A."/>
            <person name="Weidman J.F."/>
            <person name="Khouri H.M."/>
            <person name="Feldblyum T.V."/>
            <person name="Utterback T.R."/>
            <person name="Van Aken S.E."/>
            <person name="Lovley D.R."/>
            <person name="Fraser C.M."/>
        </authorList>
    </citation>
    <scope>NUCLEOTIDE SEQUENCE [LARGE SCALE GENOMIC DNA]</scope>
    <source>
        <strain>ATCC 51573 / DSM 12127 / PCA</strain>
    </source>
</reference>
<accession>Q74CT9</accession>
<feature type="chain" id="PRO_0000411123" description="Adenosylmethionine-8-amino-7-oxononanoate aminotransferase">
    <location>
        <begin position="1"/>
        <end position="453"/>
    </location>
</feature>
<feature type="binding site" evidence="1">
    <location>
        <begin position="118"/>
        <end position="119"/>
    </location>
    <ligand>
        <name>pyridoxal 5'-phosphate</name>
        <dbReference type="ChEBI" id="CHEBI:597326"/>
    </ligand>
</feature>
<feature type="binding site" evidence="1">
    <location>
        <position position="151"/>
    </location>
    <ligand>
        <name>substrate</name>
    </ligand>
</feature>
<feature type="binding site" evidence="1">
    <location>
        <position position="258"/>
    </location>
    <ligand>
        <name>pyridoxal 5'-phosphate</name>
        <dbReference type="ChEBI" id="CHEBI:597326"/>
    </ligand>
</feature>
<feature type="binding site" evidence="1">
    <location>
        <position position="287"/>
    </location>
    <ligand>
        <name>substrate</name>
    </ligand>
</feature>
<feature type="binding site" evidence="1">
    <location>
        <position position="322"/>
    </location>
    <ligand>
        <name>substrate</name>
    </ligand>
</feature>
<feature type="binding site" evidence="1">
    <location>
        <position position="417"/>
    </location>
    <ligand>
        <name>substrate</name>
    </ligand>
</feature>
<feature type="site" description="Participates in the substrate recognition with KAPA and in a stacking interaction with the adenine ring of SAM" evidence="1">
    <location>
        <position position="21"/>
    </location>
</feature>
<feature type="modified residue" description="N6-(pyridoxal phosphate)lysine" evidence="1">
    <location>
        <position position="287"/>
    </location>
</feature>
<gene>
    <name evidence="1" type="primary">bioA</name>
    <name type="ordered locus">GSU1582</name>
</gene>
<name>BIOA_GEOSL</name>
<organism>
    <name type="scientific">Geobacter sulfurreducens (strain ATCC 51573 / DSM 12127 / PCA)</name>
    <dbReference type="NCBI Taxonomy" id="243231"/>
    <lineage>
        <taxon>Bacteria</taxon>
        <taxon>Pseudomonadati</taxon>
        <taxon>Thermodesulfobacteriota</taxon>
        <taxon>Desulfuromonadia</taxon>
        <taxon>Geobacterales</taxon>
        <taxon>Geobacteraceae</taxon>
        <taxon>Geobacter</taxon>
    </lineage>
</organism>
<proteinExistence type="inferred from homology"/>
<protein>
    <recommendedName>
        <fullName evidence="1">Adenosylmethionine-8-amino-7-oxononanoate aminotransferase</fullName>
        <ecNumber evidence="1">2.6.1.62</ecNumber>
    </recommendedName>
    <alternativeName>
        <fullName evidence="1">7,8-diamino-pelargonic acid aminotransferase</fullName>
        <shortName evidence="1">DAPA AT</shortName>
        <shortName evidence="1">DAPA aminotransferase</shortName>
    </alternativeName>
    <alternativeName>
        <fullName evidence="1">7,8-diaminononanoate synthase</fullName>
        <shortName evidence="1">DANS</shortName>
    </alternativeName>
    <alternativeName>
        <fullName evidence="1">Diaminopelargonic acid synthase</fullName>
    </alternativeName>
</protein>